<organism>
    <name type="scientific">Oryzias latipes</name>
    <name type="common">Japanese rice fish</name>
    <name type="synonym">Japanese killifish</name>
    <dbReference type="NCBI Taxonomy" id="8090"/>
    <lineage>
        <taxon>Eukaryota</taxon>
        <taxon>Metazoa</taxon>
        <taxon>Chordata</taxon>
        <taxon>Craniata</taxon>
        <taxon>Vertebrata</taxon>
        <taxon>Euteleostomi</taxon>
        <taxon>Actinopterygii</taxon>
        <taxon>Neopterygii</taxon>
        <taxon>Teleostei</taxon>
        <taxon>Neoteleostei</taxon>
        <taxon>Acanthomorphata</taxon>
        <taxon>Ovalentaria</taxon>
        <taxon>Atherinomorphae</taxon>
        <taxon>Beloniformes</taxon>
        <taxon>Adrianichthyidae</taxon>
        <taxon>Oryziinae</taxon>
        <taxon>Oryzias</taxon>
    </lineage>
</organism>
<keyword id="KW-0256">Endoplasmic reticulum</keyword>
<keyword id="KW-0349">Heme</keyword>
<keyword id="KW-0408">Iron</keyword>
<keyword id="KW-0472">Membrane</keyword>
<keyword id="KW-0479">Metal-binding</keyword>
<keyword id="KW-0492">Microsome</keyword>
<keyword id="KW-0503">Monooxygenase</keyword>
<keyword id="KW-0560">Oxidoreductase</keyword>
<keyword id="KW-1185">Reference proteome</keyword>
<feature type="chain" id="PRO_0000051812" description="Cytochrome P450 3A40">
    <location>
        <begin position="1"/>
        <end position="502"/>
    </location>
</feature>
<feature type="binding site" description="axial binding residue" evidence="1">
    <location>
        <position position="443"/>
    </location>
    <ligand>
        <name>heme</name>
        <dbReference type="ChEBI" id="CHEBI:30413"/>
    </ligand>
    <ligandPart>
        <name>Fe</name>
        <dbReference type="ChEBI" id="CHEBI:18248"/>
    </ligandPart>
</feature>
<reference key="1">
    <citation type="journal article" date="2001" name="Mol. Reprod. Dev.">
        <title>Identification, characterization, and ontogeny of a second cytochrome P450 3A gene from the fresh water teleost medaka (Oryzias latipes).</title>
        <authorList>
            <person name="Kullman S.W."/>
            <person name="Hinton D.E."/>
        </authorList>
    </citation>
    <scope>NUCLEOTIDE SEQUENCE [MRNA]</scope>
</reference>
<sequence>MGNFLYFSAETWTLLVAFITLLLVYAYWPYGTFKRLGIPGPKPVPFFGTMLAYRKGFFNFDDECRKKYGKTWGIYDGRQPVLCITDPATIKAVLVKECYSLFTNRRNFRLNGPLYDAVSIAEDDQWKRIRSVLSPSFTSGRLKEMFDIMKHHSANLIQSMKKKVDKDEPLEMKEYFGPYSMDVVTSTAFSVDIDSLNNPSDPFVTNIKKMLKFDFLNPLFLAVAFFPFLGPILEKFEFSLFPSSVMDFFFAALRKIKANHENNKQKSRIDFLQLMIDSQKNNQNGLQDKGLSDHEILSQAMIFIFAGYETTSSSLTFLAYNLATNPEVMKKLQKEIDATFPNKAPVQYVPLMEMEYLDCVVNESLRLYPIAARLERVAKATVEVNGLVIPKDMVVMVPTWPLHRDPELWPEPEKFKPERFSKENKDTFDPYTYMPFGAGPRNCIGMRFALVMMKLAVVEILQTYDFSVCKETEVPFEMDVQGFLAPKRPIQLKLTPRSASSS</sequence>
<accession>Q98T91</accession>
<evidence type="ECO:0000250" key="1"/>
<evidence type="ECO:0000305" key="2"/>
<protein>
    <recommendedName>
        <fullName>Cytochrome P450 3A40</fullName>
        <ecNumber>1.14.14.1</ecNumber>
    </recommendedName>
</protein>
<dbReference type="EC" id="1.14.14.1"/>
<dbReference type="EMBL" id="AF251272">
    <property type="protein sequence ID" value="AAK37960.1"/>
    <property type="molecule type" value="mRNA"/>
</dbReference>
<dbReference type="RefSeq" id="NP_001098565.1">
    <property type="nucleotide sequence ID" value="NM_001105095.1"/>
</dbReference>
<dbReference type="SMR" id="Q98T91"/>
<dbReference type="STRING" id="8090.ENSORLP00000042262"/>
<dbReference type="GeneID" id="100125817"/>
<dbReference type="KEGG" id="ola:100125817"/>
<dbReference type="CTD" id="100125817"/>
<dbReference type="eggNOG" id="KOG0158">
    <property type="taxonomic scope" value="Eukaryota"/>
</dbReference>
<dbReference type="InParanoid" id="Q98T91"/>
<dbReference type="OrthoDB" id="1470350at2759"/>
<dbReference type="Proteomes" id="UP000001038">
    <property type="component" value="Unplaced"/>
</dbReference>
<dbReference type="Proteomes" id="UP000265180">
    <property type="component" value="Chromosome 9"/>
</dbReference>
<dbReference type="Proteomes" id="UP000265200">
    <property type="component" value="Chromosome 9"/>
</dbReference>
<dbReference type="GO" id="GO:0005789">
    <property type="term" value="C:endoplasmic reticulum membrane"/>
    <property type="evidence" value="ECO:0007669"/>
    <property type="project" value="UniProtKB-SubCell"/>
</dbReference>
<dbReference type="GO" id="GO:0020037">
    <property type="term" value="F:heme binding"/>
    <property type="evidence" value="ECO:0007669"/>
    <property type="project" value="InterPro"/>
</dbReference>
<dbReference type="GO" id="GO:0005506">
    <property type="term" value="F:iron ion binding"/>
    <property type="evidence" value="ECO:0007669"/>
    <property type="project" value="InterPro"/>
</dbReference>
<dbReference type="GO" id="GO:0016712">
    <property type="term" value="F:oxidoreductase activity, acting on paired donors, with incorporation or reduction of molecular oxygen, reduced flavin or flavoprotein as one donor, and incorporation of one atom of oxygen"/>
    <property type="evidence" value="ECO:0007669"/>
    <property type="project" value="UniProtKB-EC"/>
</dbReference>
<dbReference type="GO" id="GO:0008395">
    <property type="term" value="F:steroid hydroxylase activity"/>
    <property type="evidence" value="ECO:0000318"/>
    <property type="project" value="GO_Central"/>
</dbReference>
<dbReference type="CDD" id="cd20650">
    <property type="entry name" value="CYP3A"/>
    <property type="match status" value="1"/>
</dbReference>
<dbReference type="FunFam" id="1.10.630.10:FF:000003">
    <property type="entry name" value="cytochrome P450 3A12-like isoform X2"/>
    <property type="match status" value="1"/>
</dbReference>
<dbReference type="Gene3D" id="1.10.630.10">
    <property type="entry name" value="Cytochrome P450"/>
    <property type="match status" value="1"/>
</dbReference>
<dbReference type="InterPro" id="IPR001128">
    <property type="entry name" value="Cyt_P450"/>
</dbReference>
<dbReference type="InterPro" id="IPR017972">
    <property type="entry name" value="Cyt_P450_CS"/>
</dbReference>
<dbReference type="InterPro" id="IPR008072">
    <property type="entry name" value="Cyt_P450_E_CYP3A"/>
</dbReference>
<dbReference type="InterPro" id="IPR002402">
    <property type="entry name" value="Cyt_P450_E_grp-II"/>
</dbReference>
<dbReference type="InterPro" id="IPR036396">
    <property type="entry name" value="Cyt_P450_sf"/>
</dbReference>
<dbReference type="InterPro" id="IPR050705">
    <property type="entry name" value="Cytochrome_P450_3A"/>
</dbReference>
<dbReference type="PANTHER" id="PTHR24302">
    <property type="entry name" value="CYTOCHROME P450 FAMILY 3"/>
    <property type="match status" value="1"/>
</dbReference>
<dbReference type="PANTHER" id="PTHR24302:SF32">
    <property type="entry name" value="CYTOCHROME P450, FAMILY 3, SUBFAMILY A, POLYPEPTIDE 65"/>
    <property type="match status" value="1"/>
</dbReference>
<dbReference type="Pfam" id="PF00067">
    <property type="entry name" value="p450"/>
    <property type="match status" value="1"/>
</dbReference>
<dbReference type="PRINTS" id="PR00464">
    <property type="entry name" value="EP450II"/>
</dbReference>
<dbReference type="PRINTS" id="PR01689">
    <property type="entry name" value="EP450IICYP3A"/>
</dbReference>
<dbReference type="PRINTS" id="PR00385">
    <property type="entry name" value="P450"/>
</dbReference>
<dbReference type="SUPFAM" id="SSF48264">
    <property type="entry name" value="Cytochrome P450"/>
    <property type="match status" value="1"/>
</dbReference>
<dbReference type="PROSITE" id="PS00086">
    <property type="entry name" value="CYTOCHROME_P450"/>
    <property type="match status" value="1"/>
</dbReference>
<comment type="catalytic activity">
    <reaction>
        <text>an organic molecule + reduced [NADPH--hemoprotein reductase] + O2 = an alcohol + oxidized [NADPH--hemoprotein reductase] + H2O + H(+)</text>
        <dbReference type="Rhea" id="RHEA:17149"/>
        <dbReference type="Rhea" id="RHEA-COMP:11964"/>
        <dbReference type="Rhea" id="RHEA-COMP:11965"/>
        <dbReference type="ChEBI" id="CHEBI:15377"/>
        <dbReference type="ChEBI" id="CHEBI:15378"/>
        <dbReference type="ChEBI" id="CHEBI:15379"/>
        <dbReference type="ChEBI" id="CHEBI:30879"/>
        <dbReference type="ChEBI" id="CHEBI:57618"/>
        <dbReference type="ChEBI" id="CHEBI:58210"/>
        <dbReference type="ChEBI" id="CHEBI:142491"/>
        <dbReference type="EC" id="1.14.14.1"/>
    </reaction>
</comment>
<comment type="cofactor">
    <cofactor evidence="1">
        <name>heme</name>
        <dbReference type="ChEBI" id="CHEBI:30413"/>
    </cofactor>
</comment>
<comment type="subcellular location">
    <subcellularLocation>
        <location evidence="2">Endoplasmic reticulum membrane</location>
        <topology evidence="2">Peripheral membrane protein</topology>
    </subcellularLocation>
    <subcellularLocation>
        <location evidence="2">Microsome membrane</location>
        <topology evidence="2">Peripheral membrane protein</topology>
    </subcellularLocation>
</comment>
<comment type="similarity">
    <text evidence="2">Belongs to the cytochrome P450 family.</text>
</comment>
<proteinExistence type="evidence at transcript level"/>
<gene>
    <name type="primary">cyp3a40</name>
</gene>
<name>C340_ORYLA</name>